<accession>Q9NP99</accession>
<accession>B4DWG2</accession>
<accession>K7EJW1</accession>
<accession>Q53FL8</accession>
<accession>Q5T2C9</accession>
<accession>Q86YU1</accession>
<feature type="signal peptide" evidence="1">
    <location>
        <begin position="1"/>
        <end position="20"/>
    </location>
</feature>
<feature type="chain" id="PRO_0000014986" description="Triggering receptor expressed on myeloid cells 1">
    <location>
        <begin position="21"/>
        <end position="234"/>
    </location>
</feature>
<feature type="topological domain" description="Extracellular" evidence="1">
    <location>
        <begin position="21"/>
        <end position="205"/>
    </location>
</feature>
<feature type="transmembrane region" description="Helical" evidence="1">
    <location>
        <begin position="206"/>
        <end position="226"/>
    </location>
</feature>
<feature type="topological domain" description="Cytoplasmic" evidence="1">
    <location>
        <begin position="227"/>
        <end position="234"/>
    </location>
</feature>
<feature type="domain" description="Ig-like V-type">
    <location>
        <begin position="26"/>
        <end position="134"/>
    </location>
</feature>
<feature type="glycosylation site" description="N-linked (GlcNAc...) asparagine" evidence="1">
    <location>
        <position position="146"/>
    </location>
</feature>
<feature type="glycosylation site" description="N-linked (GlcNAc...) asparagine" evidence="1">
    <location>
        <position position="191"/>
    </location>
</feature>
<feature type="glycosylation site" description="N-linked (GlcNAc...) asparagine" evidence="1">
    <location>
        <position position="194"/>
    </location>
</feature>
<feature type="disulfide bond" evidence="5 6 20 21">
    <location>
        <begin position="41"/>
        <end position="113"/>
    </location>
</feature>
<feature type="splice variant" id="VSP_010790" description="In isoform 2." evidence="16 17 18">
    <original>SGTPGSNENSTQN</original>
    <variation>RCSTLSFSWLVDS</variation>
    <location>
        <begin position="138"/>
        <end position="150"/>
    </location>
</feature>
<feature type="splice variant" id="VSP_010791" description="In isoform 2." evidence="16 17 18">
    <location>
        <begin position="151"/>
        <end position="234"/>
    </location>
</feature>
<feature type="splice variant" id="VSP_053939" description="In isoform 3." evidence="19">
    <original>VPVFNIVILLAGGFLSKSLVFSVLFAVTLRSFVP</original>
    <variation>YSFQVPGPLVWTLSPLFPSLCAERM</variation>
    <location>
        <begin position="201"/>
        <end position="234"/>
    </location>
</feature>
<feature type="sequence variant" id="VAR_019333" description="In dbSNP:rs2234237." evidence="15">
    <original>T</original>
    <variation>S</variation>
    <location>
        <position position="25"/>
    </location>
</feature>
<feature type="sequence variant" id="VAR_035525" description="In a breast cancer sample; somatic mutation." evidence="7">
    <original>R</original>
    <variation>S</variation>
    <location>
        <position position="97"/>
    </location>
</feature>
<feature type="sequence variant" id="VAR_049949" description="In dbSNP:rs34727391.">
    <original>K</original>
    <variation>T</variation>
    <location>
        <position position="135"/>
    </location>
</feature>
<feature type="sequence variant" id="VAR_033624" description="In dbSNP:rs2234245.">
    <original>F</original>
    <variation>L</variation>
    <location>
        <position position="214"/>
    </location>
</feature>
<feature type="sequence conflict" description="In Ref. 3; AAL74018." evidence="19" ref="3">
    <original>Q</original>
    <variation>K</variation>
    <location>
        <position position="35"/>
    </location>
</feature>
<feature type="strand" evidence="23">
    <location>
        <begin position="22"/>
        <end position="30"/>
    </location>
</feature>
<feature type="strand" evidence="23">
    <location>
        <begin position="37"/>
        <end position="42"/>
    </location>
</feature>
<feature type="helix" evidence="23">
    <location>
        <begin position="45"/>
        <end position="48"/>
    </location>
</feature>
<feature type="strand" evidence="23">
    <location>
        <begin position="53"/>
        <end position="58"/>
    </location>
</feature>
<feature type="turn" evidence="22">
    <location>
        <begin position="60"/>
        <end position="62"/>
    </location>
</feature>
<feature type="strand" evidence="23">
    <location>
        <begin position="65"/>
        <end position="69"/>
    </location>
</feature>
<feature type="strand" evidence="23">
    <location>
        <begin position="80"/>
        <end position="82"/>
    </location>
</feature>
<feature type="strand" evidence="23">
    <location>
        <begin position="85"/>
        <end position="90"/>
    </location>
</feature>
<feature type="turn" evidence="23">
    <location>
        <begin position="91"/>
        <end position="94"/>
    </location>
</feature>
<feature type="strand" evidence="23">
    <location>
        <begin position="95"/>
        <end position="100"/>
    </location>
</feature>
<feature type="helix" evidence="23">
    <location>
        <begin position="105"/>
        <end position="107"/>
    </location>
</feature>
<feature type="strand" evidence="23">
    <location>
        <begin position="109"/>
        <end position="115"/>
    </location>
</feature>
<feature type="strand" evidence="22">
    <location>
        <begin position="123"/>
        <end position="125"/>
    </location>
</feature>
<feature type="strand" evidence="23">
    <location>
        <begin position="128"/>
        <end position="132"/>
    </location>
</feature>
<name>TREM1_HUMAN</name>
<comment type="function">
    <molecule>Isoform 1</molecule>
    <text evidence="2 3 5 8 9 10 11 12 14">Cell surface receptor that plays important roles in innate and adaptive immunity by amplifying inflammatory responses (PubMed:10799849, PubMed:21393102). Upon activation by various ligands such as PGLYRP1, HMGB1 or HSP70, multimerizes and forms a complex with transmembrane adapter TYROBP/DAP12 (PubMed:17568691, PubMed:25595774, PubMed:29568119). In turn, initiates a SYK-mediated cascade of tyrosine phosphorylation, activating multiple downstream mediators such as BTK, MAPK1, MAPK3 or phospholipase C-gamma (PubMed:14656437, PubMed:21659545). This cascade promotes the neutrophil- and macrophage-mediated release of pro-inflammatory cytokines and/or chemokines, as well as their migration and thereby amplifies inflammatory responses that are triggered by bacterial and fungal infections (PubMed:17098818, PubMed:17568691). By also promoting the amplification of inflammatory signals that are initially triggered by Toll-like receptor (TLR) and NOD-like receptor engagement, plays a major role in the pathophysiology of acute and chronic inflammatory diseases of different etiologies including septic shock and atherosclerosis (PubMed:11323674, PubMed:21393102).</text>
</comment>
<comment type="function">
    <molecule>Isoform 2</molecule>
    <text evidence="13">Acts as a decoy receptor, counterbalancing TREM1 pro-inflammatory activity through the neutralization of its ligand.</text>
</comment>
<comment type="subunit">
    <text evidence="2 6 8 10 14">Monomer (PubMed:29568119). Homomultimer; when activated (PubMed:29568119). Interacts with TYROBP/DAP12 (PubMed:10799849, PubMed:15351648). Interacts with TLR4 (PubMed:17098818, PubMed:21393102).</text>
</comment>
<comment type="subcellular location">
    <molecule>Isoform 1</molecule>
    <subcellularLocation>
        <location evidence="8 10">Cell membrane</location>
        <topology evidence="19">Single-pass type I membrane protein</topology>
    </subcellularLocation>
    <text evidence="8">Recruited to lipid rafts when activated.</text>
</comment>
<comment type="subcellular location">
    <molecule>Isoform 2</molecule>
    <subcellularLocation>
        <location evidence="13">Secreted</location>
    </subcellularLocation>
</comment>
<comment type="alternative products">
    <event type="alternative splicing"/>
    <isoform>
        <id>Q9NP99-1</id>
        <name>1</name>
        <sequence type="displayed"/>
    </isoform>
    <isoform>
        <id>Q9NP99-2</id>
        <name>2</name>
        <name>TREM-1sv</name>
        <name>sTREM1</name>
        <sequence type="described" ref="VSP_010790 VSP_010791"/>
    </isoform>
    <isoform>
        <id>Q9NP99-3</id>
        <name>3</name>
        <sequence type="described" ref="VSP_053939"/>
    </isoform>
</comment>
<comment type="tissue specificity">
    <text evidence="2 4 10">Mostly expressed by immune cells of the myeloid lineage, such as monocytes, macrophages, neutrophils and dendritic cells (PubMed:10799849). Expression is associated with a mature stage of myeloid development (PubMed:11922939). Highly expressed in adult liver, lung and spleen than in corresponding fetal tissue. Also expressed in the lymph node, placenta, spinal cord and heart tissues. Isoform 2 was detected in the lung, liver and mature monocytes.</text>
</comment>
<comment type="induction">
    <text evidence="2">Up-regulated by bacteria, fungi and bacterial lipopolysaccharides (LPS).</text>
</comment>
<comment type="PTM">
    <text evidence="2">Glycosylated.</text>
</comment>
<gene>
    <name type="primary">TREM1</name>
</gene>
<dbReference type="EMBL" id="AF196329">
    <property type="protein sequence ID" value="AAF71694.1"/>
    <property type="molecule type" value="mRNA"/>
</dbReference>
<dbReference type="EMBL" id="AF287008">
    <property type="protein sequence ID" value="AAF90197.1"/>
    <property type="molecule type" value="mRNA"/>
</dbReference>
<dbReference type="EMBL" id="AY074783">
    <property type="protein sequence ID" value="AAL74018.1"/>
    <property type="molecule type" value="mRNA"/>
</dbReference>
<dbReference type="EMBL" id="AK301519">
    <property type="protein sequence ID" value="BAG63024.1"/>
    <property type="molecule type" value="mRNA"/>
</dbReference>
<dbReference type="EMBL" id="AL391903">
    <property type="status" value="NOT_ANNOTATED_CDS"/>
    <property type="molecule type" value="Genomic_DNA"/>
</dbReference>
<dbReference type="EMBL" id="BC017773">
    <property type="protein sequence ID" value="AAH17773.1"/>
    <property type="molecule type" value="mRNA"/>
</dbReference>
<dbReference type="EMBL" id="AK223264">
    <property type="protein sequence ID" value="BAD96984.1"/>
    <property type="molecule type" value="mRNA"/>
</dbReference>
<dbReference type="CCDS" id="CCDS4854.1">
    <molecule id="Q9NP99-1"/>
</dbReference>
<dbReference type="CCDS" id="CCDS56427.1">
    <molecule id="Q9NP99-2"/>
</dbReference>
<dbReference type="CCDS" id="CCDS59499.1">
    <molecule id="Q9NP99-3"/>
</dbReference>
<dbReference type="RefSeq" id="NP_001229518.1">
    <molecule id="Q9NP99-3"/>
    <property type="nucleotide sequence ID" value="NM_001242589.3"/>
</dbReference>
<dbReference type="RefSeq" id="NP_001229519.1">
    <molecule id="Q9NP99-2"/>
    <property type="nucleotide sequence ID" value="NM_001242590.3"/>
</dbReference>
<dbReference type="RefSeq" id="NP_061113.1">
    <molecule id="Q9NP99-1"/>
    <property type="nucleotide sequence ID" value="NM_018643.5"/>
</dbReference>
<dbReference type="RefSeq" id="XP_016866445.1">
    <property type="nucleotide sequence ID" value="XM_017010956.1"/>
</dbReference>
<dbReference type="RefSeq" id="XP_016866446.1">
    <property type="nucleotide sequence ID" value="XM_017010957.1"/>
</dbReference>
<dbReference type="PDB" id="1Q8M">
    <property type="method" value="X-ray"/>
    <property type="resolution" value="2.60 A"/>
    <property type="chains" value="A/B/C/D=17-134"/>
</dbReference>
<dbReference type="PDB" id="1SMO">
    <property type="method" value="X-ray"/>
    <property type="resolution" value="1.47 A"/>
    <property type="chains" value="A/B=21-139"/>
</dbReference>
<dbReference type="PDBsum" id="1Q8M"/>
<dbReference type="PDBsum" id="1SMO"/>
<dbReference type="SMR" id="Q9NP99"/>
<dbReference type="BioGRID" id="119926">
    <property type="interactions" value="18"/>
</dbReference>
<dbReference type="FunCoup" id="Q9NP99">
    <property type="interactions" value="310"/>
</dbReference>
<dbReference type="IntAct" id="Q9NP99">
    <property type="interactions" value="15"/>
</dbReference>
<dbReference type="STRING" id="9606.ENSP00000244709"/>
<dbReference type="ChEMBL" id="CHEMBL1697674"/>
<dbReference type="DrugBank" id="DB01694">
    <property type="generic name" value="D-tartaric acid"/>
</dbReference>
<dbReference type="GlyCosmos" id="Q9NP99">
    <property type="glycosylation" value="3 sites, No reported glycans"/>
</dbReference>
<dbReference type="GlyGen" id="Q9NP99">
    <property type="glycosylation" value="4 sites"/>
</dbReference>
<dbReference type="iPTMnet" id="Q9NP99"/>
<dbReference type="PhosphoSitePlus" id="Q9NP99"/>
<dbReference type="BioMuta" id="TREM1"/>
<dbReference type="DMDM" id="50401685"/>
<dbReference type="jPOST" id="Q9NP99"/>
<dbReference type="MassIVE" id="Q9NP99"/>
<dbReference type="PaxDb" id="9606-ENSP00000244709"/>
<dbReference type="PeptideAtlas" id="Q9NP99"/>
<dbReference type="ProteomicsDB" id="81942">
    <molecule id="Q9NP99-1"/>
</dbReference>
<dbReference type="ProteomicsDB" id="81943">
    <molecule id="Q9NP99-2"/>
</dbReference>
<dbReference type="Antibodypedia" id="1616">
    <property type="antibodies" value="757 antibodies from 41 providers"/>
</dbReference>
<dbReference type="DNASU" id="54210"/>
<dbReference type="Ensembl" id="ENST00000244709.9">
    <molecule id="Q9NP99-1"/>
    <property type="protein sequence ID" value="ENSP00000244709.3"/>
    <property type="gene ID" value="ENSG00000124731.14"/>
</dbReference>
<dbReference type="Ensembl" id="ENST00000334475.11">
    <molecule id="Q9NP99-2"/>
    <property type="protein sequence ID" value="ENSP00000334284.5"/>
    <property type="gene ID" value="ENSG00000124731.14"/>
</dbReference>
<dbReference type="Ensembl" id="ENST00000591620.1">
    <molecule id="Q9NP99-3"/>
    <property type="protein sequence ID" value="ENSP00000465345.1"/>
    <property type="gene ID" value="ENSG00000124731.14"/>
</dbReference>
<dbReference type="GeneID" id="54210"/>
<dbReference type="KEGG" id="hsa:54210"/>
<dbReference type="MANE-Select" id="ENST00000244709.9">
    <property type="protein sequence ID" value="ENSP00000244709.3"/>
    <property type="RefSeq nucleotide sequence ID" value="NM_018643.5"/>
    <property type="RefSeq protein sequence ID" value="NP_061113.1"/>
</dbReference>
<dbReference type="UCSC" id="uc003oqf.3">
    <molecule id="Q9NP99-1"/>
    <property type="organism name" value="human"/>
</dbReference>
<dbReference type="AGR" id="HGNC:17760"/>
<dbReference type="CTD" id="54210"/>
<dbReference type="DisGeNET" id="54210"/>
<dbReference type="GeneCards" id="TREM1"/>
<dbReference type="HGNC" id="HGNC:17760">
    <property type="gene designation" value="TREM1"/>
</dbReference>
<dbReference type="HPA" id="ENSG00000124731">
    <property type="expression patterns" value="Tissue enhanced (bone marrow, lung, lymphoid tissue)"/>
</dbReference>
<dbReference type="MIM" id="605085">
    <property type="type" value="gene"/>
</dbReference>
<dbReference type="neXtProt" id="NX_Q9NP99"/>
<dbReference type="OpenTargets" id="ENSG00000124731"/>
<dbReference type="PharmGKB" id="PA38467"/>
<dbReference type="VEuPathDB" id="HostDB:ENSG00000124731"/>
<dbReference type="eggNOG" id="ENOG502TE0T">
    <property type="taxonomic scope" value="Eukaryota"/>
</dbReference>
<dbReference type="GeneTree" id="ENSGT00470000042299"/>
<dbReference type="HOGENOM" id="CLU_1170307_0_0_1"/>
<dbReference type="InParanoid" id="Q9NP99"/>
<dbReference type="OMA" id="MTDIIRV"/>
<dbReference type="OrthoDB" id="8959642at2759"/>
<dbReference type="PAN-GO" id="Q9NP99">
    <property type="GO annotations" value="4 GO annotations based on evolutionary models"/>
</dbReference>
<dbReference type="PhylomeDB" id="Q9NP99"/>
<dbReference type="TreeFam" id="TF339293"/>
<dbReference type="PathwayCommons" id="Q9NP99"/>
<dbReference type="Reactome" id="R-HSA-198933">
    <property type="pathway name" value="Immunoregulatory interactions between a Lymphoid and a non-Lymphoid cell"/>
</dbReference>
<dbReference type="Reactome" id="R-HSA-202733">
    <property type="pathway name" value="Cell surface interactions at the vascular wall"/>
</dbReference>
<dbReference type="Reactome" id="R-HSA-2172127">
    <property type="pathway name" value="DAP12 interactions"/>
</dbReference>
<dbReference type="SignaLink" id="Q9NP99"/>
<dbReference type="BioGRID-ORCS" id="54210">
    <property type="hits" value="11 hits in 1159 CRISPR screens"/>
</dbReference>
<dbReference type="ChiTaRS" id="TREM1">
    <property type="organism name" value="human"/>
</dbReference>
<dbReference type="EvolutionaryTrace" id="Q9NP99"/>
<dbReference type="GeneWiki" id="TREM1"/>
<dbReference type="GenomeRNAi" id="54210"/>
<dbReference type="Pharos" id="Q9NP99">
    <property type="development level" value="Tbio"/>
</dbReference>
<dbReference type="PRO" id="PR:Q9NP99"/>
<dbReference type="Proteomes" id="UP000005640">
    <property type="component" value="Chromosome 6"/>
</dbReference>
<dbReference type="RNAct" id="Q9NP99">
    <property type="molecule type" value="protein"/>
</dbReference>
<dbReference type="Bgee" id="ENSG00000124731">
    <property type="expression patterns" value="Expressed in monocyte and 119 other cell types or tissues"/>
</dbReference>
<dbReference type="ExpressionAtlas" id="Q9NP99">
    <property type="expression patterns" value="baseline and differential"/>
</dbReference>
<dbReference type="GO" id="GO:0009986">
    <property type="term" value="C:cell surface"/>
    <property type="evidence" value="ECO:0000314"/>
    <property type="project" value="UniProt"/>
</dbReference>
<dbReference type="GO" id="GO:0005576">
    <property type="term" value="C:extracellular region"/>
    <property type="evidence" value="ECO:0007669"/>
    <property type="project" value="UniProtKB-SubCell"/>
</dbReference>
<dbReference type="GO" id="GO:0005615">
    <property type="term" value="C:extracellular space"/>
    <property type="evidence" value="ECO:0000314"/>
    <property type="project" value="UniProt"/>
</dbReference>
<dbReference type="GO" id="GO:0005886">
    <property type="term" value="C:plasma membrane"/>
    <property type="evidence" value="ECO:0000304"/>
    <property type="project" value="Reactome"/>
</dbReference>
<dbReference type="GO" id="GO:0140319">
    <property type="term" value="F:receptor decoy activity"/>
    <property type="evidence" value="ECO:0000314"/>
    <property type="project" value="UniProt"/>
</dbReference>
<dbReference type="GO" id="GO:0097110">
    <property type="term" value="F:scaffold protein binding"/>
    <property type="evidence" value="ECO:0000353"/>
    <property type="project" value="BHF-UCL"/>
</dbReference>
<dbReference type="GO" id="GO:0038023">
    <property type="term" value="F:signaling receptor activity"/>
    <property type="evidence" value="ECO:0000304"/>
    <property type="project" value="ProtInc"/>
</dbReference>
<dbReference type="GO" id="GO:0004888">
    <property type="term" value="F:transmembrane signaling receptor activity"/>
    <property type="evidence" value="ECO:0000314"/>
    <property type="project" value="UniProt"/>
</dbReference>
<dbReference type="GO" id="GO:0002250">
    <property type="term" value="P:adaptive immune response"/>
    <property type="evidence" value="ECO:0007669"/>
    <property type="project" value="UniProtKB-KW"/>
</dbReference>
<dbReference type="GO" id="GO:0006959">
    <property type="term" value="P:humoral immune response"/>
    <property type="evidence" value="ECO:0000304"/>
    <property type="project" value="ProtInc"/>
</dbReference>
<dbReference type="GO" id="GO:0006955">
    <property type="term" value="P:immune response"/>
    <property type="evidence" value="ECO:0000318"/>
    <property type="project" value="GO_Central"/>
</dbReference>
<dbReference type="GO" id="GO:0045087">
    <property type="term" value="P:innate immune response"/>
    <property type="evidence" value="ECO:0007669"/>
    <property type="project" value="UniProtKB-KW"/>
</dbReference>
<dbReference type="GO" id="GO:0035556">
    <property type="term" value="P:intracellular signal transduction"/>
    <property type="evidence" value="ECO:0000304"/>
    <property type="project" value="ProtInc"/>
</dbReference>
<dbReference type="GO" id="GO:0030593">
    <property type="term" value="P:neutrophil chemotaxis"/>
    <property type="evidence" value="ECO:0000318"/>
    <property type="project" value="GO_Central"/>
</dbReference>
<dbReference type="GO" id="GO:0070945">
    <property type="term" value="P:neutrophil-mediated killing of gram-negative bacterium"/>
    <property type="evidence" value="ECO:0000318"/>
    <property type="project" value="GO_Central"/>
</dbReference>
<dbReference type="CDD" id="cd05716">
    <property type="entry name" value="IgV_pIgR_like"/>
    <property type="match status" value="1"/>
</dbReference>
<dbReference type="FunFam" id="2.60.40.10:FF:002053">
    <property type="entry name" value="Triggering receptor expressed on myeloid cells 1"/>
    <property type="match status" value="1"/>
</dbReference>
<dbReference type="Gene3D" id="2.60.40.10">
    <property type="entry name" value="Immunoglobulins"/>
    <property type="match status" value="1"/>
</dbReference>
<dbReference type="InterPro" id="IPR036179">
    <property type="entry name" value="Ig-like_dom_sf"/>
</dbReference>
<dbReference type="InterPro" id="IPR013783">
    <property type="entry name" value="Ig-like_fold"/>
</dbReference>
<dbReference type="InterPro" id="IPR003599">
    <property type="entry name" value="Ig_sub"/>
</dbReference>
<dbReference type="InterPro" id="IPR013106">
    <property type="entry name" value="Ig_V-set"/>
</dbReference>
<dbReference type="PANTHER" id="PTHR19357">
    <property type="entry name" value="TRIGGERING RECEPTOR EXPRESSED ON MYELOID CELLS 1"/>
    <property type="match status" value="1"/>
</dbReference>
<dbReference type="PANTHER" id="PTHR19357:SF0">
    <property type="entry name" value="TRIGGERING RECEPTOR EXPRESSED ON MYELOID CELLS 1"/>
    <property type="match status" value="1"/>
</dbReference>
<dbReference type="Pfam" id="PF07686">
    <property type="entry name" value="V-set"/>
    <property type="match status" value="1"/>
</dbReference>
<dbReference type="SMART" id="SM00409">
    <property type="entry name" value="IG"/>
    <property type="match status" value="1"/>
</dbReference>
<dbReference type="SUPFAM" id="SSF48726">
    <property type="entry name" value="Immunoglobulin"/>
    <property type="match status" value="1"/>
</dbReference>
<proteinExistence type="evidence at protein level"/>
<protein>
    <recommendedName>
        <fullName>Triggering receptor expressed on myeloid cells 1</fullName>
        <shortName>TREM-1</shortName>
    </recommendedName>
    <alternativeName>
        <fullName>Triggering receptor expressed on monocytes 1</fullName>
    </alternativeName>
    <cdAntigenName>CD354</cdAntigenName>
</protein>
<organism>
    <name type="scientific">Homo sapiens</name>
    <name type="common">Human</name>
    <dbReference type="NCBI Taxonomy" id="9606"/>
    <lineage>
        <taxon>Eukaryota</taxon>
        <taxon>Metazoa</taxon>
        <taxon>Chordata</taxon>
        <taxon>Craniata</taxon>
        <taxon>Vertebrata</taxon>
        <taxon>Euteleostomi</taxon>
        <taxon>Mammalia</taxon>
        <taxon>Eutheria</taxon>
        <taxon>Euarchontoglires</taxon>
        <taxon>Primates</taxon>
        <taxon>Haplorrhini</taxon>
        <taxon>Catarrhini</taxon>
        <taxon>Hominidae</taxon>
        <taxon>Homo</taxon>
    </lineage>
</organism>
<keyword id="KW-0002">3D-structure</keyword>
<keyword id="KW-1064">Adaptive immunity</keyword>
<keyword id="KW-0025">Alternative splicing</keyword>
<keyword id="KW-1003">Cell membrane</keyword>
<keyword id="KW-1015">Disulfide bond</keyword>
<keyword id="KW-0325">Glycoprotein</keyword>
<keyword id="KW-0391">Immunity</keyword>
<keyword id="KW-0393">Immunoglobulin domain</keyword>
<keyword id="KW-0399">Innate immunity</keyword>
<keyword id="KW-0472">Membrane</keyword>
<keyword id="KW-1267">Proteomics identification</keyword>
<keyword id="KW-0675">Receptor</keyword>
<keyword id="KW-1185">Reference proteome</keyword>
<keyword id="KW-0964">Secreted</keyword>
<keyword id="KW-0732">Signal</keyword>
<keyword id="KW-0812">Transmembrane</keyword>
<keyword id="KW-1133">Transmembrane helix</keyword>
<sequence length="234" mass="26387">MRKTRLWGLLWMLFVSELRAATKLTEEKYELKEGQTLDVKCDYTLEKFASSQKAWQIIRDGEMPKTLACTERPSKNSHPVQVGRIILEDYHDHGLLRVRMVNLQVEDSGLYQCVIYQPPKEPHMLFDRIRLVVTKGFSGTPGSNENSTQNVYKIPPTTTKALCPLYTSPRTVTQAPPKSTADVSTPDSEINLTNVTDIIRVPVFNIVILLAGGFLSKSLVFSVLFAVTLRSFVP</sequence>
<reference key="1">
    <citation type="journal article" date="2000" name="J. Immunol.">
        <title>Inflammatory responses can be triggered by TREM-1, a novel receptor expressed on neutrophils and monocytes.</title>
        <authorList>
            <person name="Bouchon A."/>
            <person name="Dietrich J."/>
            <person name="Colonna M."/>
        </authorList>
    </citation>
    <scope>NUCLEOTIDE SEQUENCE [MRNA] (ISOFORM 1)</scope>
    <scope>FUNCTION (ISOFORM 1)</scope>
    <scope>INDUCTION</scope>
    <scope>TISSUE SPECIFICITY</scope>
    <scope>GLYCOSYLATION</scope>
    <scope>INTERACTION WITH TYROBP/DAP12</scope>
    <source>
        <tissue>Monocyte</tissue>
        <tissue>Neutrophil</tissue>
    </source>
</reference>
<reference key="2">
    <citation type="journal article" date="2002" name="Mol. Immunol.">
        <title>TREM-1, MDL-1, and DAP12 expression is associated with a mature stage of myeloid development.</title>
        <authorList>
            <person name="Gingras M.-C."/>
            <person name="Lapillonne H."/>
            <person name="Margolin J.F."/>
        </authorList>
    </citation>
    <scope>NUCLEOTIDE SEQUENCE [MRNA] (ISOFORMS 1 AND 2)</scope>
    <scope>TISSUE SPECIFICITY</scope>
</reference>
<reference key="3">
    <citation type="submission" date="2002-01" db="EMBL/GenBank/DDBJ databases">
        <title>Identification of a soluble form of TREM1 (sTREM1) from dendritic cells.</title>
        <authorList>
            <person name="Begum N.A."/>
            <person name="Seya T."/>
        </authorList>
    </citation>
    <scope>NUCLEOTIDE SEQUENCE [MRNA] (ISOFORM 2)</scope>
</reference>
<reference key="4">
    <citation type="journal article" date="2004" name="Nat. Genet.">
        <title>Complete sequencing and characterization of 21,243 full-length human cDNAs.</title>
        <authorList>
            <person name="Ota T."/>
            <person name="Suzuki Y."/>
            <person name="Nishikawa T."/>
            <person name="Otsuki T."/>
            <person name="Sugiyama T."/>
            <person name="Irie R."/>
            <person name="Wakamatsu A."/>
            <person name="Hayashi K."/>
            <person name="Sato H."/>
            <person name="Nagai K."/>
            <person name="Kimura K."/>
            <person name="Makita H."/>
            <person name="Sekine M."/>
            <person name="Obayashi M."/>
            <person name="Nishi T."/>
            <person name="Shibahara T."/>
            <person name="Tanaka T."/>
            <person name="Ishii S."/>
            <person name="Yamamoto J."/>
            <person name="Saito K."/>
            <person name="Kawai Y."/>
            <person name="Isono Y."/>
            <person name="Nakamura Y."/>
            <person name="Nagahari K."/>
            <person name="Murakami K."/>
            <person name="Yasuda T."/>
            <person name="Iwayanagi T."/>
            <person name="Wagatsuma M."/>
            <person name="Shiratori A."/>
            <person name="Sudo H."/>
            <person name="Hosoiri T."/>
            <person name="Kaku Y."/>
            <person name="Kodaira H."/>
            <person name="Kondo H."/>
            <person name="Sugawara M."/>
            <person name="Takahashi M."/>
            <person name="Kanda K."/>
            <person name="Yokoi T."/>
            <person name="Furuya T."/>
            <person name="Kikkawa E."/>
            <person name="Omura Y."/>
            <person name="Abe K."/>
            <person name="Kamihara K."/>
            <person name="Katsuta N."/>
            <person name="Sato K."/>
            <person name="Tanikawa M."/>
            <person name="Yamazaki M."/>
            <person name="Ninomiya K."/>
            <person name="Ishibashi T."/>
            <person name="Yamashita H."/>
            <person name="Murakawa K."/>
            <person name="Fujimori K."/>
            <person name="Tanai H."/>
            <person name="Kimata M."/>
            <person name="Watanabe M."/>
            <person name="Hiraoka S."/>
            <person name="Chiba Y."/>
            <person name="Ishida S."/>
            <person name="Ono Y."/>
            <person name="Takiguchi S."/>
            <person name="Watanabe S."/>
            <person name="Yosida M."/>
            <person name="Hotuta T."/>
            <person name="Kusano J."/>
            <person name="Kanehori K."/>
            <person name="Takahashi-Fujii A."/>
            <person name="Hara H."/>
            <person name="Tanase T.-O."/>
            <person name="Nomura Y."/>
            <person name="Togiya S."/>
            <person name="Komai F."/>
            <person name="Hara R."/>
            <person name="Takeuchi K."/>
            <person name="Arita M."/>
            <person name="Imose N."/>
            <person name="Musashino K."/>
            <person name="Yuuki H."/>
            <person name="Oshima A."/>
            <person name="Sasaki N."/>
            <person name="Aotsuka S."/>
            <person name="Yoshikawa Y."/>
            <person name="Matsunawa H."/>
            <person name="Ichihara T."/>
            <person name="Shiohata N."/>
            <person name="Sano S."/>
            <person name="Moriya S."/>
            <person name="Momiyama H."/>
            <person name="Satoh N."/>
            <person name="Takami S."/>
            <person name="Terashima Y."/>
            <person name="Suzuki O."/>
            <person name="Nakagawa S."/>
            <person name="Senoh A."/>
            <person name="Mizoguchi H."/>
            <person name="Goto Y."/>
            <person name="Shimizu F."/>
            <person name="Wakebe H."/>
            <person name="Hishigaki H."/>
            <person name="Watanabe T."/>
            <person name="Sugiyama A."/>
            <person name="Takemoto M."/>
            <person name="Kawakami B."/>
            <person name="Yamazaki M."/>
            <person name="Watanabe K."/>
            <person name="Kumagai A."/>
            <person name="Itakura S."/>
            <person name="Fukuzumi Y."/>
            <person name="Fujimori Y."/>
            <person name="Komiyama M."/>
            <person name="Tashiro H."/>
            <person name="Tanigami A."/>
            <person name="Fujiwara T."/>
            <person name="Ono T."/>
            <person name="Yamada K."/>
            <person name="Fujii Y."/>
            <person name="Ozaki K."/>
            <person name="Hirao M."/>
            <person name="Ohmori Y."/>
            <person name="Kawabata A."/>
            <person name="Hikiji T."/>
            <person name="Kobatake N."/>
            <person name="Inagaki H."/>
            <person name="Ikema Y."/>
            <person name="Okamoto S."/>
            <person name="Okitani R."/>
            <person name="Kawakami T."/>
            <person name="Noguchi S."/>
            <person name="Itoh T."/>
            <person name="Shigeta K."/>
            <person name="Senba T."/>
            <person name="Matsumura K."/>
            <person name="Nakajima Y."/>
            <person name="Mizuno T."/>
            <person name="Morinaga M."/>
            <person name="Sasaki M."/>
            <person name="Togashi T."/>
            <person name="Oyama M."/>
            <person name="Hata H."/>
            <person name="Watanabe M."/>
            <person name="Komatsu T."/>
            <person name="Mizushima-Sugano J."/>
            <person name="Satoh T."/>
            <person name="Shirai Y."/>
            <person name="Takahashi Y."/>
            <person name="Nakagawa K."/>
            <person name="Okumura K."/>
            <person name="Nagase T."/>
            <person name="Nomura N."/>
            <person name="Kikuchi H."/>
            <person name="Masuho Y."/>
            <person name="Yamashita R."/>
            <person name="Nakai K."/>
            <person name="Yada T."/>
            <person name="Nakamura Y."/>
            <person name="Ohara O."/>
            <person name="Isogai T."/>
            <person name="Sugano S."/>
        </authorList>
    </citation>
    <scope>NUCLEOTIDE SEQUENCE [LARGE SCALE MRNA] (ISOFORM 2)</scope>
    <source>
        <tissue>Synovium</tissue>
    </source>
</reference>
<reference key="5">
    <citation type="journal article" date="2003" name="Nature">
        <title>The DNA sequence and analysis of human chromosome 6.</title>
        <authorList>
            <person name="Mungall A.J."/>
            <person name="Palmer S.A."/>
            <person name="Sims S.K."/>
            <person name="Edwards C.A."/>
            <person name="Ashurst J.L."/>
            <person name="Wilming L."/>
            <person name="Jones M.C."/>
            <person name="Horton R."/>
            <person name="Hunt S.E."/>
            <person name="Scott C.E."/>
            <person name="Gilbert J.G.R."/>
            <person name="Clamp M.E."/>
            <person name="Bethel G."/>
            <person name="Milne S."/>
            <person name="Ainscough R."/>
            <person name="Almeida J.P."/>
            <person name="Ambrose K.D."/>
            <person name="Andrews T.D."/>
            <person name="Ashwell R.I.S."/>
            <person name="Babbage A.K."/>
            <person name="Bagguley C.L."/>
            <person name="Bailey J."/>
            <person name="Banerjee R."/>
            <person name="Barker D.J."/>
            <person name="Barlow K.F."/>
            <person name="Bates K."/>
            <person name="Beare D.M."/>
            <person name="Beasley H."/>
            <person name="Beasley O."/>
            <person name="Bird C.P."/>
            <person name="Blakey S.E."/>
            <person name="Bray-Allen S."/>
            <person name="Brook J."/>
            <person name="Brown A.J."/>
            <person name="Brown J.Y."/>
            <person name="Burford D.C."/>
            <person name="Burrill W."/>
            <person name="Burton J."/>
            <person name="Carder C."/>
            <person name="Carter N.P."/>
            <person name="Chapman J.C."/>
            <person name="Clark S.Y."/>
            <person name="Clark G."/>
            <person name="Clee C.M."/>
            <person name="Clegg S."/>
            <person name="Cobley V."/>
            <person name="Collier R.E."/>
            <person name="Collins J.E."/>
            <person name="Colman L.K."/>
            <person name="Corby N.R."/>
            <person name="Coville G.J."/>
            <person name="Culley K.M."/>
            <person name="Dhami P."/>
            <person name="Davies J."/>
            <person name="Dunn M."/>
            <person name="Earthrowl M.E."/>
            <person name="Ellington A.E."/>
            <person name="Evans K.A."/>
            <person name="Faulkner L."/>
            <person name="Francis M.D."/>
            <person name="Frankish A."/>
            <person name="Frankland J."/>
            <person name="French L."/>
            <person name="Garner P."/>
            <person name="Garnett J."/>
            <person name="Ghori M.J."/>
            <person name="Gilby L.M."/>
            <person name="Gillson C.J."/>
            <person name="Glithero R.J."/>
            <person name="Grafham D.V."/>
            <person name="Grant M."/>
            <person name="Gribble S."/>
            <person name="Griffiths C."/>
            <person name="Griffiths M.N.D."/>
            <person name="Hall R."/>
            <person name="Halls K.S."/>
            <person name="Hammond S."/>
            <person name="Harley J.L."/>
            <person name="Hart E.A."/>
            <person name="Heath P.D."/>
            <person name="Heathcott R."/>
            <person name="Holmes S.J."/>
            <person name="Howden P.J."/>
            <person name="Howe K.L."/>
            <person name="Howell G.R."/>
            <person name="Huckle E."/>
            <person name="Humphray S.J."/>
            <person name="Humphries M.D."/>
            <person name="Hunt A.R."/>
            <person name="Johnson C.M."/>
            <person name="Joy A.A."/>
            <person name="Kay M."/>
            <person name="Keenan S.J."/>
            <person name="Kimberley A.M."/>
            <person name="King A."/>
            <person name="Laird G.K."/>
            <person name="Langford C."/>
            <person name="Lawlor S."/>
            <person name="Leongamornlert D.A."/>
            <person name="Leversha M."/>
            <person name="Lloyd C.R."/>
            <person name="Lloyd D.M."/>
            <person name="Loveland J.E."/>
            <person name="Lovell J."/>
            <person name="Martin S."/>
            <person name="Mashreghi-Mohammadi M."/>
            <person name="Maslen G.L."/>
            <person name="Matthews L."/>
            <person name="McCann O.T."/>
            <person name="McLaren S.J."/>
            <person name="McLay K."/>
            <person name="McMurray A."/>
            <person name="Moore M.J.F."/>
            <person name="Mullikin J.C."/>
            <person name="Niblett D."/>
            <person name="Nickerson T."/>
            <person name="Novik K.L."/>
            <person name="Oliver K."/>
            <person name="Overton-Larty E.K."/>
            <person name="Parker A."/>
            <person name="Patel R."/>
            <person name="Pearce A.V."/>
            <person name="Peck A.I."/>
            <person name="Phillimore B.J.C.T."/>
            <person name="Phillips S."/>
            <person name="Plumb R.W."/>
            <person name="Porter K.M."/>
            <person name="Ramsey Y."/>
            <person name="Ranby S.A."/>
            <person name="Rice C.M."/>
            <person name="Ross M.T."/>
            <person name="Searle S.M."/>
            <person name="Sehra H.K."/>
            <person name="Sheridan E."/>
            <person name="Skuce C.D."/>
            <person name="Smith S."/>
            <person name="Smith M."/>
            <person name="Spraggon L."/>
            <person name="Squares S.L."/>
            <person name="Steward C.A."/>
            <person name="Sycamore N."/>
            <person name="Tamlyn-Hall G."/>
            <person name="Tester J."/>
            <person name="Theaker A.J."/>
            <person name="Thomas D.W."/>
            <person name="Thorpe A."/>
            <person name="Tracey A."/>
            <person name="Tromans A."/>
            <person name="Tubby B."/>
            <person name="Wall M."/>
            <person name="Wallis J.M."/>
            <person name="West A.P."/>
            <person name="White S.S."/>
            <person name="Whitehead S.L."/>
            <person name="Whittaker H."/>
            <person name="Wild A."/>
            <person name="Willey D.J."/>
            <person name="Wilmer T.E."/>
            <person name="Wood J.M."/>
            <person name="Wray P.W."/>
            <person name="Wyatt J.C."/>
            <person name="Young L."/>
            <person name="Younger R.M."/>
            <person name="Bentley D.R."/>
            <person name="Coulson A."/>
            <person name="Durbin R.M."/>
            <person name="Hubbard T."/>
            <person name="Sulston J.E."/>
            <person name="Dunham I."/>
            <person name="Rogers J."/>
            <person name="Beck S."/>
        </authorList>
    </citation>
    <scope>NUCLEOTIDE SEQUENCE [LARGE SCALE GENOMIC DNA]</scope>
</reference>
<reference key="6">
    <citation type="journal article" date="2004" name="Genome Res.">
        <title>The status, quality, and expansion of the NIH full-length cDNA project: the Mammalian Gene Collection (MGC).</title>
        <authorList>
            <consortium name="The MGC Project Team"/>
        </authorList>
    </citation>
    <scope>NUCLEOTIDE SEQUENCE [LARGE SCALE MRNA] (ISOFORM 1)</scope>
    <source>
        <tissue>Lung</tissue>
    </source>
</reference>
<reference key="7">
    <citation type="submission" date="2005-04" db="EMBL/GenBank/DDBJ databases">
        <authorList>
            <person name="Suzuki Y."/>
            <person name="Sugano S."/>
            <person name="Totoki Y."/>
            <person name="Toyoda A."/>
            <person name="Takeda T."/>
            <person name="Sakaki Y."/>
            <person name="Tanaka A."/>
            <person name="Yokoyama S."/>
        </authorList>
    </citation>
    <scope>NUCLEOTIDE SEQUENCE [LARGE SCALE MRNA] OF 1-200</scope>
    <scope>VARIANT SER-25</scope>
    <source>
        <tissue>Synovial cell</tissue>
    </source>
</reference>
<reference key="8">
    <citation type="journal article" date="2001" name="Nature">
        <title>TREM-1 amplifies inflammation and is a crucial mediator of septic shock.</title>
        <authorList>
            <person name="Bouchon A."/>
            <person name="Facchetti F."/>
            <person name="Weigand M.A."/>
            <person name="Colonna M."/>
        </authorList>
    </citation>
    <scope>FUNCTION</scope>
</reference>
<reference key="9">
    <citation type="journal article" date="2007" name="Immunol. Lett.">
        <title>Endogenous signals released from necrotic cells augment inflammatory responses to bacterial endotoxin.</title>
        <authorList>
            <person name="El Mezayen R."/>
            <person name="El Gazzar M."/>
            <person name="Seeds M.C."/>
            <person name="McCall C.E."/>
            <person name="Dreskin S.C."/>
            <person name="Nicolls M.R."/>
        </authorList>
    </citation>
    <scope>FUNCTION (ISOFORM 1)</scope>
</reference>
<reference key="10">
    <citation type="journal article" date="2007" name="Int. Immunol.">
        <title>Effects of TREM-1 activation in human neutrophils: activation of signaling pathways, recruitment into lipid rafts and association with TLR4.</title>
        <authorList>
            <person name="Fortin C.F."/>
            <person name="Lesur O."/>
            <person name="Fulop T. Jr."/>
        </authorList>
    </citation>
    <scope>FUNCTION (ISOFORM 1)</scope>
    <scope>INTERACTION WITH TLR4</scope>
    <scope>SUBCELLULAR LOCATION (ISOFORM 1)</scope>
</reference>
<reference key="11">
    <citation type="journal article" date="2011" name="Blood">
        <title>Btk is a positive regulator in the TREM-1/DAP12 signaling pathway.</title>
        <authorList>
            <person name="Ormsby T."/>
            <person name="Schlecker E."/>
            <person name="Ferdin J."/>
            <person name="Tessarz A.S."/>
            <person name="Angelisova P."/>
            <person name="Koepruelue A.D."/>
            <person name="Borte M."/>
            <person name="Warnatz K."/>
            <person name="Schulze I."/>
            <person name="Ellmeier W."/>
            <person name="Horejsi V."/>
            <person name="Cerwenka A."/>
        </authorList>
    </citation>
    <scope>FUNCTION (ISOFORM 1)</scope>
</reference>
<reference key="12">
    <citation type="journal article" date="2011" name="Eur. Cytokine Netw.">
        <title>TREM-1 interaction with the LPS/TLR4 receptor complex.</title>
        <authorList>
            <person name="Arts R.J."/>
            <person name="Joosten L.A."/>
            <person name="Dinarello C.A."/>
            <person name="Kullberg B.J."/>
            <person name="van der Meer J.W."/>
            <person name="Netea M.G."/>
        </authorList>
    </citation>
    <scope>FUNCTION (ISOFORM 1)</scope>
    <scope>SUBCELLULAR LOCATION (ISOFORM 1)</scope>
    <scope>INTERACTION WITH TLR4</scope>
</reference>
<reference key="13">
    <citation type="journal article" date="2015" name="J. Immunol.">
        <title>Cutting Edge: identification of neutrophil PGLYRP1 as a ligand for TREM-1.</title>
        <authorList>
            <person name="Read C.B."/>
            <person name="Kuijper J.L."/>
            <person name="Hjorth S.A."/>
            <person name="Heipel M.D."/>
            <person name="Tang X."/>
            <person name="Fleetwood A.J."/>
            <person name="Dantzler J.L."/>
            <person name="Grell S.N."/>
            <person name="Kastrup J."/>
            <person name="Wang C."/>
            <person name="Brandt C.S."/>
            <person name="Hansen A.J."/>
            <person name="Wagtmann N.R."/>
            <person name="Xu W."/>
            <person name="Stennicke V.W."/>
        </authorList>
    </citation>
    <scope>INTERACTION WITH PGLYRP1</scope>
    <scope>FUNCTION (ISOFORM 1)</scope>
</reference>
<reference key="14">
    <citation type="journal article" date="2015" name="J. Immunol.">
        <title>Identification of a Novel Splice Variant Isoform of TREM-1 in Human Neutrophil Granules.</title>
        <authorList>
            <person name="Baruah S."/>
            <person name="Keck K."/>
            <person name="Vrenios M."/>
            <person name="Pope M.R."/>
            <person name="Pearl M."/>
            <person name="Doerschug K."/>
            <person name="Klesney-Tait J."/>
        </authorList>
    </citation>
    <scope>FUNCTION (ISOFORM 2)</scope>
    <scope>SUBCELLULAR LOCATION (ISOFORM 2)</scope>
</reference>
<reference key="15">
    <citation type="journal article" date="2019" name="Cell. Mol. Immunol.">
        <title>TREM-1 multimerization is essential for its activation on monocytes and neutrophils.</title>
        <authorList>
            <person name="Carrasco K."/>
            <person name="Boufenzer A."/>
            <person name="Jolly L."/>
            <person name="Le Cordier H."/>
            <person name="Wang G."/>
            <person name="Heck A.J."/>
            <person name="Cerwenka A."/>
            <person name="Vinolo E."/>
            <person name="Nazabal A."/>
            <person name="Kriznik A."/>
            <person name="Launay P."/>
            <person name="Gibot S."/>
            <person name="Derive M."/>
        </authorList>
    </citation>
    <scope>FUNCTION (ISOFORM 1)</scope>
    <scope>SUBUNIT</scope>
</reference>
<reference key="16">
    <citation type="journal article" date="2003" name="Structure">
        <title>Crystal structure of the human myeloid cell activating receptor TREM-1.</title>
        <authorList>
            <person name="Radaev S."/>
            <person name="Kattah M."/>
            <person name="Rostro B."/>
            <person name="Colonna M."/>
            <person name="Sun P.D."/>
        </authorList>
    </citation>
    <scope>X-RAY CRYSTALLOGRAPHY (2.6 ANGSTROMS) OF 17-134</scope>
    <scope>DISULFIDE BOND</scope>
</reference>
<reference key="17">
    <citation type="journal article" date="2004" name="J. Mol. Biol.">
        <title>Crystal structure of human triggering receptor expressed on myeloid cells 1 (TREM-1) at 1.47 A.</title>
        <authorList>
            <person name="Kelker M.S."/>
            <person name="Foss T.R."/>
            <person name="Peti W."/>
            <person name="Teyton L."/>
            <person name="Kelly J.W."/>
            <person name="Wuethrich K."/>
            <person name="Wilson I.A."/>
        </authorList>
    </citation>
    <scope>X-RAY CRYSTALLOGRAPHY (1.47 ANGSTROMS) OF 21-139</scope>
    <scope>SUBUNIT</scope>
    <scope>DISULFIDE BOND</scope>
</reference>
<reference key="18">
    <citation type="journal article" date="2006" name="Science">
        <title>The consensus coding sequences of human breast and colorectal cancers.</title>
        <authorList>
            <person name="Sjoeblom T."/>
            <person name="Jones S."/>
            <person name="Wood L.D."/>
            <person name="Parsons D.W."/>
            <person name="Lin J."/>
            <person name="Barber T.D."/>
            <person name="Mandelker D."/>
            <person name="Leary R.J."/>
            <person name="Ptak J."/>
            <person name="Silliman N."/>
            <person name="Szabo S."/>
            <person name="Buckhaults P."/>
            <person name="Farrell C."/>
            <person name="Meeh P."/>
            <person name="Markowitz S.D."/>
            <person name="Willis J."/>
            <person name="Dawson D."/>
            <person name="Willson J.K.V."/>
            <person name="Gazdar A.F."/>
            <person name="Hartigan J."/>
            <person name="Wu L."/>
            <person name="Liu C."/>
            <person name="Parmigiani G."/>
            <person name="Park B.H."/>
            <person name="Bachman K.E."/>
            <person name="Papadopoulos N."/>
            <person name="Vogelstein B."/>
            <person name="Kinzler K.W."/>
            <person name="Velculescu V.E."/>
        </authorList>
    </citation>
    <scope>VARIANT [LARGE SCALE ANALYSIS] SER-97</scope>
</reference>
<evidence type="ECO:0000255" key="1"/>
<evidence type="ECO:0000269" key="2">
    <source>
    </source>
</evidence>
<evidence type="ECO:0000269" key="3">
    <source>
    </source>
</evidence>
<evidence type="ECO:0000269" key="4">
    <source>
    </source>
</evidence>
<evidence type="ECO:0000269" key="5">
    <source>
    </source>
</evidence>
<evidence type="ECO:0000269" key="6">
    <source>
    </source>
</evidence>
<evidence type="ECO:0000269" key="7">
    <source>
    </source>
</evidence>
<evidence type="ECO:0000269" key="8">
    <source>
    </source>
</evidence>
<evidence type="ECO:0000269" key="9">
    <source>
    </source>
</evidence>
<evidence type="ECO:0000269" key="10">
    <source>
    </source>
</evidence>
<evidence type="ECO:0000269" key="11">
    <source>
    </source>
</evidence>
<evidence type="ECO:0000269" key="12">
    <source>
    </source>
</evidence>
<evidence type="ECO:0000269" key="13">
    <source>
    </source>
</evidence>
<evidence type="ECO:0000269" key="14">
    <source>
    </source>
</evidence>
<evidence type="ECO:0000269" key="15">
    <source ref="7"/>
</evidence>
<evidence type="ECO:0000303" key="16">
    <source>
    </source>
</evidence>
<evidence type="ECO:0000303" key="17">
    <source>
    </source>
</evidence>
<evidence type="ECO:0000303" key="18">
    <source ref="3"/>
</evidence>
<evidence type="ECO:0000305" key="19"/>
<evidence type="ECO:0007744" key="20">
    <source>
        <dbReference type="PDB" id="1Q8M"/>
    </source>
</evidence>
<evidence type="ECO:0007744" key="21">
    <source>
        <dbReference type="PDB" id="1SMO"/>
    </source>
</evidence>
<evidence type="ECO:0007829" key="22">
    <source>
        <dbReference type="PDB" id="1Q8M"/>
    </source>
</evidence>
<evidence type="ECO:0007829" key="23">
    <source>
        <dbReference type="PDB" id="1SMO"/>
    </source>
</evidence>